<accession>P0A327</accession>
<accession>Q577G4</accession>
<accession>Q59170</accession>
<sequence length="499" mass="56446">MTDRPIMTTSAGAPIPDNQNSLTAGERGPILMQDYQLIEKLSHQNRERIPERAVHAKGWGAYGTLTITGDISRYTKAKVLQPGAQTPMLARFSTVAGELGAADAERDVRGFALKFYTQEGNWDLVGNNTPVFFVRDPLKFPDFIHTQKRHPRTHLRSATAMWDFWSLSPESLHQVTILMSDRGLPTDVRHINGYGSHTYSFWNDAGERYWVKFHFKTMQGHKHWTNAEAEQVIGRTRESTQEDLFSAIENGEFPKWKVQVQIMPELDADKTPYNPFDLTKVWPHADYPPIDIGVMELNRNPENYFTEVENAAFSPSNIVPGIGFSPDKMLQARIFSYADAHRHRLGTHYESIPVNQPKCPVHHYHRDGQMNVYGGIKTGNPDAYYEPNSFNGPVEQPSAKEPPLCISGNADRYNHRIGNDDYSQPRALFNLFDAAQKQRLFSNIAAAMKGVPGFIVERQLGHFKLIHPEYEAGVRKALKDAHGYDANTIALNEKITAAE</sequence>
<keyword id="KW-0903">Direct protein sequencing</keyword>
<keyword id="KW-0349">Heme</keyword>
<keyword id="KW-0376">Hydrogen peroxide</keyword>
<keyword id="KW-0408">Iron</keyword>
<keyword id="KW-0479">Metal-binding</keyword>
<keyword id="KW-0560">Oxidoreductase</keyword>
<keyword id="KW-0574">Periplasm</keyword>
<keyword id="KW-0575">Peroxidase</keyword>
<gene>
    <name type="primary">katA</name>
    <name type="ordered locus">BruAb2_0827</name>
</gene>
<comment type="function">
    <text>Decomposes hydrogen peroxide into water and oxygen; serves to protect cells from the toxic effects of hydrogen peroxide.</text>
</comment>
<comment type="catalytic activity">
    <reaction>
        <text>2 H2O2 = O2 + 2 H2O</text>
        <dbReference type="Rhea" id="RHEA:20309"/>
        <dbReference type="ChEBI" id="CHEBI:15377"/>
        <dbReference type="ChEBI" id="CHEBI:15379"/>
        <dbReference type="ChEBI" id="CHEBI:16240"/>
        <dbReference type="EC" id="1.11.1.6"/>
    </reaction>
</comment>
<comment type="cofactor">
    <cofactor>
        <name>heme</name>
        <dbReference type="ChEBI" id="CHEBI:30413"/>
    </cofactor>
</comment>
<comment type="subunit">
    <text>Homotetramer.</text>
</comment>
<comment type="subcellular location">
    <subcellularLocation>
        <location>Periplasm</location>
    </subcellularLocation>
</comment>
<comment type="similarity">
    <text evidence="4">Belongs to the catalase family.</text>
</comment>
<feature type="initiator methionine" description="Removed" evidence="3">
    <location>
        <position position="1"/>
    </location>
</feature>
<feature type="chain" id="PRO_0000084980" description="Catalase">
    <location>
        <begin position="2"/>
        <end position="499"/>
    </location>
</feature>
<feature type="region of interest" description="Disordered" evidence="2">
    <location>
        <begin position="1"/>
        <end position="25"/>
    </location>
</feature>
<feature type="compositionally biased region" description="Polar residues" evidence="2">
    <location>
        <begin position="7"/>
        <end position="23"/>
    </location>
</feature>
<feature type="active site" evidence="1">
    <location>
        <position position="55"/>
    </location>
</feature>
<feature type="active site" evidence="1">
    <location>
        <position position="127"/>
    </location>
</feature>
<feature type="binding site" description="axial binding residue" evidence="1">
    <location>
        <position position="337"/>
    </location>
    <ligand>
        <name>heme</name>
        <dbReference type="ChEBI" id="CHEBI:30413"/>
    </ligand>
    <ligandPart>
        <name>Fe</name>
        <dbReference type="ChEBI" id="CHEBI:18248"/>
    </ligandPart>
</feature>
<evidence type="ECO:0000250" key="1"/>
<evidence type="ECO:0000256" key="2">
    <source>
        <dbReference type="SAM" id="MobiDB-lite"/>
    </source>
</evidence>
<evidence type="ECO:0000269" key="3">
    <source>
    </source>
</evidence>
<evidence type="ECO:0000305" key="4"/>
<reference key="1">
    <citation type="journal article" date="1994" name="J. Bacteriol.">
        <title>Brucella abortus catalase is a periplasmic protein lacking a standard signal sequence.</title>
        <authorList>
            <person name="Sha Z."/>
            <person name="Stabel T.J."/>
            <person name="Mayfield J.E."/>
        </authorList>
    </citation>
    <scope>NUCLEOTIDE SEQUENCE [GENOMIC DNA]</scope>
    <scope>PROTEIN SEQUENCE OF 2-11</scope>
    <source>
        <strain>19</strain>
    </source>
</reference>
<reference key="2">
    <citation type="journal article" date="2005" name="J. Bacteriol.">
        <title>Completion of the genome sequence of Brucella abortus and comparison to the highly similar genomes of Brucella melitensis and Brucella suis.</title>
        <authorList>
            <person name="Halling S.M."/>
            <person name="Peterson-Burch B.D."/>
            <person name="Bricker B.J."/>
            <person name="Zuerner R.L."/>
            <person name="Qing Z."/>
            <person name="Li L.-L."/>
            <person name="Kapur V."/>
            <person name="Alt D.P."/>
            <person name="Olsen S.C."/>
        </authorList>
    </citation>
    <scope>NUCLEOTIDE SEQUENCE [LARGE SCALE GENOMIC DNA]</scope>
    <source>
        <strain>9-941</strain>
    </source>
</reference>
<proteinExistence type="evidence at protein level"/>
<name>CATA_BRUAB</name>
<organism>
    <name type="scientific">Brucella abortus biovar 1 (strain 9-941)</name>
    <dbReference type="NCBI Taxonomy" id="262698"/>
    <lineage>
        <taxon>Bacteria</taxon>
        <taxon>Pseudomonadati</taxon>
        <taxon>Pseudomonadota</taxon>
        <taxon>Alphaproteobacteria</taxon>
        <taxon>Hyphomicrobiales</taxon>
        <taxon>Brucellaceae</taxon>
        <taxon>Brucella/Ochrobactrum group</taxon>
        <taxon>Brucella</taxon>
    </lineage>
</organism>
<dbReference type="EC" id="1.11.1.6"/>
<dbReference type="EMBL" id="U11439">
    <property type="protein sequence ID" value="AAA64655.1"/>
    <property type="molecule type" value="Genomic_DNA"/>
</dbReference>
<dbReference type="EMBL" id="AE017224">
    <property type="protein sequence ID" value="AAX76220.1"/>
    <property type="molecule type" value="Genomic_DNA"/>
</dbReference>
<dbReference type="PIR" id="A55227">
    <property type="entry name" value="A55227"/>
</dbReference>
<dbReference type="RefSeq" id="WP_002966234.1">
    <property type="nucleotide sequence ID" value="NC_006933.1"/>
</dbReference>
<dbReference type="SMR" id="P0A327"/>
<dbReference type="EnsemblBacteria" id="AAX76220">
    <property type="protein sequence ID" value="AAX76220"/>
    <property type="gene ID" value="BruAb2_0827"/>
</dbReference>
<dbReference type="GeneID" id="97535490"/>
<dbReference type="KEGG" id="bmb:BruAb2_0827"/>
<dbReference type="HOGENOM" id="CLU_010645_4_1_5"/>
<dbReference type="SABIO-RK" id="P0A327"/>
<dbReference type="Proteomes" id="UP000000540">
    <property type="component" value="Chromosome II"/>
</dbReference>
<dbReference type="GO" id="GO:0005737">
    <property type="term" value="C:cytoplasm"/>
    <property type="evidence" value="ECO:0007669"/>
    <property type="project" value="TreeGrafter"/>
</dbReference>
<dbReference type="GO" id="GO:0042597">
    <property type="term" value="C:periplasmic space"/>
    <property type="evidence" value="ECO:0007669"/>
    <property type="project" value="UniProtKB-SubCell"/>
</dbReference>
<dbReference type="GO" id="GO:0004096">
    <property type="term" value="F:catalase activity"/>
    <property type="evidence" value="ECO:0007669"/>
    <property type="project" value="UniProtKB-EC"/>
</dbReference>
<dbReference type="GO" id="GO:0020037">
    <property type="term" value="F:heme binding"/>
    <property type="evidence" value="ECO:0007669"/>
    <property type="project" value="InterPro"/>
</dbReference>
<dbReference type="GO" id="GO:0046872">
    <property type="term" value="F:metal ion binding"/>
    <property type="evidence" value="ECO:0007669"/>
    <property type="project" value="UniProtKB-KW"/>
</dbReference>
<dbReference type="GO" id="GO:0042744">
    <property type="term" value="P:hydrogen peroxide catabolic process"/>
    <property type="evidence" value="ECO:0007669"/>
    <property type="project" value="UniProtKB-KW"/>
</dbReference>
<dbReference type="GO" id="GO:0042542">
    <property type="term" value="P:response to hydrogen peroxide"/>
    <property type="evidence" value="ECO:0007669"/>
    <property type="project" value="TreeGrafter"/>
</dbReference>
<dbReference type="CDD" id="cd08156">
    <property type="entry name" value="catalase_clade_3"/>
    <property type="match status" value="1"/>
</dbReference>
<dbReference type="FunFam" id="2.40.180.10:FF:000001">
    <property type="entry name" value="Catalase"/>
    <property type="match status" value="1"/>
</dbReference>
<dbReference type="Gene3D" id="2.40.180.10">
    <property type="entry name" value="Catalase core domain"/>
    <property type="match status" value="1"/>
</dbReference>
<dbReference type="InterPro" id="IPR018028">
    <property type="entry name" value="Catalase"/>
</dbReference>
<dbReference type="InterPro" id="IPR040333">
    <property type="entry name" value="Catalase_3"/>
</dbReference>
<dbReference type="InterPro" id="IPR024711">
    <property type="entry name" value="Catalase_clade1/3"/>
</dbReference>
<dbReference type="InterPro" id="IPR011614">
    <property type="entry name" value="Catalase_core"/>
</dbReference>
<dbReference type="InterPro" id="IPR002226">
    <property type="entry name" value="Catalase_haem_BS"/>
</dbReference>
<dbReference type="InterPro" id="IPR010582">
    <property type="entry name" value="Catalase_immune_responsive"/>
</dbReference>
<dbReference type="InterPro" id="IPR020835">
    <property type="entry name" value="Catalase_sf"/>
</dbReference>
<dbReference type="PANTHER" id="PTHR11465">
    <property type="entry name" value="CATALASE"/>
    <property type="match status" value="1"/>
</dbReference>
<dbReference type="PANTHER" id="PTHR11465:SF61">
    <property type="entry name" value="CATALASE"/>
    <property type="match status" value="1"/>
</dbReference>
<dbReference type="Pfam" id="PF00199">
    <property type="entry name" value="Catalase"/>
    <property type="match status" value="1"/>
</dbReference>
<dbReference type="Pfam" id="PF06628">
    <property type="entry name" value="Catalase-rel"/>
    <property type="match status" value="1"/>
</dbReference>
<dbReference type="PIRSF" id="PIRSF038928">
    <property type="entry name" value="Catalase_clade1-3"/>
    <property type="match status" value="1"/>
</dbReference>
<dbReference type="PRINTS" id="PR00067">
    <property type="entry name" value="CATALASE"/>
</dbReference>
<dbReference type="SMART" id="SM01060">
    <property type="entry name" value="Catalase"/>
    <property type="match status" value="1"/>
</dbReference>
<dbReference type="SUPFAM" id="SSF56634">
    <property type="entry name" value="Heme-dependent catalase-like"/>
    <property type="match status" value="1"/>
</dbReference>
<dbReference type="PROSITE" id="PS00437">
    <property type="entry name" value="CATALASE_1"/>
    <property type="match status" value="1"/>
</dbReference>
<dbReference type="PROSITE" id="PS51402">
    <property type="entry name" value="CATALASE_3"/>
    <property type="match status" value="1"/>
</dbReference>
<protein>
    <recommendedName>
        <fullName>Catalase</fullName>
        <ecNumber>1.11.1.6</ecNumber>
    </recommendedName>
</protein>